<gene>
    <name type="primary">SEC31</name>
    <name type="ORF">SNOG_07409</name>
</gene>
<feature type="chain" id="PRO_0000295443" description="Protein transport protein SEC31">
    <location>
        <begin position="1"/>
        <end position="1256"/>
    </location>
</feature>
<feature type="repeat" description="WD 1">
    <location>
        <begin position="7"/>
        <end position="47"/>
    </location>
</feature>
<feature type="repeat" description="WD 2">
    <location>
        <begin position="66"/>
        <end position="110"/>
    </location>
</feature>
<feature type="repeat" description="WD 3">
    <location>
        <begin position="119"/>
        <end position="159"/>
    </location>
</feature>
<feature type="repeat" description="WD 4">
    <location>
        <begin position="165"/>
        <end position="205"/>
    </location>
</feature>
<feature type="repeat" description="WD 5">
    <location>
        <begin position="209"/>
        <end position="241"/>
    </location>
</feature>
<feature type="repeat" description="WD 6">
    <location>
        <begin position="242"/>
        <end position="281"/>
    </location>
</feature>
<feature type="repeat" description="WD 7; interaction with SEC13" evidence="2">
    <location>
        <begin position="368"/>
        <end position="390"/>
    </location>
</feature>
<feature type="region of interest" description="Disordered" evidence="3">
    <location>
        <begin position="460"/>
        <end position="481"/>
    </location>
</feature>
<feature type="region of interest" description="Disordered" evidence="3">
    <location>
        <begin position="761"/>
        <end position="1139"/>
    </location>
</feature>
<feature type="compositionally biased region" description="Low complexity" evidence="3">
    <location>
        <begin position="765"/>
        <end position="809"/>
    </location>
</feature>
<feature type="compositionally biased region" description="Low complexity" evidence="3">
    <location>
        <begin position="833"/>
        <end position="862"/>
    </location>
</feature>
<feature type="compositionally biased region" description="Pro residues" evidence="3">
    <location>
        <begin position="944"/>
        <end position="968"/>
    </location>
</feature>
<feature type="compositionally biased region" description="Low complexity" evidence="3">
    <location>
        <begin position="969"/>
        <end position="978"/>
    </location>
</feature>
<feature type="compositionally biased region" description="Low complexity" evidence="3">
    <location>
        <begin position="1023"/>
        <end position="1041"/>
    </location>
</feature>
<feature type="compositionally biased region" description="Pro residues" evidence="3">
    <location>
        <begin position="1046"/>
        <end position="1058"/>
    </location>
</feature>
<feature type="compositionally biased region" description="Low complexity" evidence="3">
    <location>
        <begin position="1061"/>
        <end position="1082"/>
    </location>
</feature>
<feature type="compositionally biased region" description="Pro residues" evidence="3">
    <location>
        <begin position="1083"/>
        <end position="1111"/>
    </location>
</feature>
<feature type="compositionally biased region" description="Low complexity" evidence="3">
    <location>
        <begin position="1123"/>
        <end position="1132"/>
    </location>
</feature>
<sequence length="1256" mass="134502">MVRLREIPRTATFAWSPGPTQPLIATGTKAGAVDADFSNDTQLELWELKLDDAEQGVELQPVATVSVDSRFNDIAWSQPSEQHPRGIIAGALDSGALVLWDAEKLRTGASDAQIDQIDKHTGPIQAIQFNPFRPNILASAGAKGELFVHDLDDESKSFRLGKAGANPDEYTTLDWNKKVAHILATGSSGGFVTVWDVKGKKENLTLNHFGRKTVSAVSWDPDVPTRLVTAIPTDQNPLVLAHDQGVLSLSWCPQDSDILLSCGKDNRTIAWNPHSGEQLGRISGRDKLDLPDQIQPVEPEPYSRPASFDGKIAVQTLQNTGANADQSKTAKQAPEGEDFFAQTHAEPQGASFSLKSPPKWLKRRAGVAFGFGGKLVRFGVVDAKSKITISTFAVDSDISQASEDFDKALETGDLTSILESKISKAATDEEKADWTVIETLTSDNPRTKLVEYLGFADQSEEAPAEVKKEAQTNGDADEGSSFFDNATDEGNFLSDLAARKGAKTNNPFQVYTGSESEADTKITRALMLGNFDAALDVCLKENRLSDAFMIAICGGEKCVAKAQAAYFKRQSDAPNYLRLLASVVGKNLWDFVYNADLKDWKEVMATICTFADQAEFPDLCEALGDRLEEAIAEGTTSYRKDASFCYLAGSKLEKVVVNWAQELQENENAGLEQSETDNSFSIHARSLQDFIEKVTVFRKVTQFKDTEQSKENDWKLEPLYAKYVEYADIASAHGQLAIAEKYLDLLPQKYPAADVARNRVKQATRKGAAPAAAGQRQSQPAAAQRGQRVVPAYGAPAPQPTPAQRTASPYAPANPLAPAQTNSPYAPVNPLSQQAQQATQQPPARAGGAYTPAGYQPAPVQQGYGGYGQQQQAPLAPPPQNFSNPNGPSIVPAANRGHIPAWNDTPDFGPPKTASRRGTPLNAVASPFPNQQQNYGPPGGASPGFPPQSRPTPPPPPKGPPQGPPRMTSPPSQAGGAPPNAPNPYAPSPAANNYAPPPSGFAPPQQAPVQRGASPYQPPQSAAPPSNRYAPAPGSQPSAPSGMGGMPPPRNIAPPPGQFTPGASAYAPSPYAQSPAQQAPAAVAPPPRGPPQGPPRAGPPPGGPPQGGPPRPESRPGTGQSQPAAPAAARYPPGDREHIPMVSRPIYEILGAEIQRVKAKAPAQYKAHVTDTEKRLNILFDHLNNEDLLKPDTIQQMNELASNIQAKQFDEAIAIFQDLMTNKNDEGSNWLVSDVITFDADVGVKRLIQFSKSTPA</sequence>
<dbReference type="EMBL" id="CH445335">
    <property type="protein sequence ID" value="EAT84875.2"/>
    <property type="molecule type" value="Genomic_DNA"/>
</dbReference>
<dbReference type="RefSeq" id="XP_001797743.1">
    <property type="nucleotide sequence ID" value="XM_001797691.1"/>
</dbReference>
<dbReference type="SMR" id="Q0ULF5"/>
<dbReference type="FunCoup" id="Q0ULF5">
    <property type="interactions" value="693"/>
</dbReference>
<dbReference type="STRING" id="321614.Q0ULF5"/>
<dbReference type="EnsemblFungi" id="SNOT_07409">
    <property type="protein sequence ID" value="SNOT_07409"/>
    <property type="gene ID" value="SNOG_07409"/>
</dbReference>
<dbReference type="GeneID" id="5974521"/>
<dbReference type="KEGG" id="pno:SNOG_07409"/>
<dbReference type="VEuPathDB" id="FungiDB:JI435_074090"/>
<dbReference type="eggNOG" id="KOG0307">
    <property type="taxonomic scope" value="Eukaryota"/>
</dbReference>
<dbReference type="HOGENOM" id="CLU_003033_2_0_1"/>
<dbReference type="InParanoid" id="Q0ULF5"/>
<dbReference type="Proteomes" id="UP000001055">
    <property type="component" value="Unassembled WGS sequence"/>
</dbReference>
<dbReference type="GO" id="GO:0030127">
    <property type="term" value="C:COPII vesicle coat"/>
    <property type="evidence" value="ECO:0000318"/>
    <property type="project" value="GO_Central"/>
</dbReference>
<dbReference type="GO" id="GO:0070971">
    <property type="term" value="C:endoplasmic reticulum exit site"/>
    <property type="evidence" value="ECO:0000318"/>
    <property type="project" value="GO_Central"/>
</dbReference>
<dbReference type="GO" id="GO:0005789">
    <property type="term" value="C:endoplasmic reticulum membrane"/>
    <property type="evidence" value="ECO:0007669"/>
    <property type="project" value="UniProtKB-SubCell"/>
</dbReference>
<dbReference type="GO" id="GO:0005198">
    <property type="term" value="F:structural molecule activity"/>
    <property type="evidence" value="ECO:0000318"/>
    <property type="project" value="GO_Central"/>
</dbReference>
<dbReference type="GO" id="GO:0090110">
    <property type="term" value="P:COPII-coated vesicle cargo loading"/>
    <property type="evidence" value="ECO:0000318"/>
    <property type="project" value="GO_Central"/>
</dbReference>
<dbReference type="GO" id="GO:0007029">
    <property type="term" value="P:endoplasmic reticulum organization"/>
    <property type="evidence" value="ECO:0000318"/>
    <property type="project" value="GO_Central"/>
</dbReference>
<dbReference type="GO" id="GO:0015031">
    <property type="term" value="P:protein transport"/>
    <property type="evidence" value="ECO:0007669"/>
    <property type="project" value="UniProtKB-KW"/>
</dbReference>
<dbReference type="FunFam" id="1.20.940.10:FF:000007">
    <property type="entry name" value="Protein transport protein (SEC31), putative"/>
    <property type="match status" value="1"/>
</dbReference>
<dbReference type="Gene3D" id="1.25.40.1030">
    <property type="match status" value="1"/>
</dbReference>
<dbReference type="Gene3D" id="1.20.940.10">
    <property type="entry name" value="Functional domain of the splicing factor Prp18"/>
    <property type="match status" value="1"/>
</dbReference>
<dbReference type="Gene3D" id="2.130.10.10">
    <property type="entry name" value="YVTN repeat-like/Quinoprotein amine dehydrogenase"/>
    <property type="match status" value="1"/>
</dbReference>
<dbReference type="InterPro" id="IPR040251">
    <property type="entry name" value="SEC31-like"/>
</dbReference>
<dbReference type="InterPro" id="IPR015943">
    <property type="entry name" value="WD40/YVTN_repeat-like_dom_sf"/>
</dbReference>
<dbReference type="InterPro" id="IPR036322">
    <property type="entry name" value="WD40_repeat_dom_sf"/>
</dbReference>
<dbReference type="InterPro" id="IPR001680">
    <property type="entry name" value="WD40_rpt"/>
</dbReference>
<dbReference type="PANTHER" id="PTHR13923">
    <property type="entry name" value="SEC31-RELATED PROTEIN"/>
    <property type="match status" value="1"/>
</dbReference>
<dbReference type="PANTHER" id="PTHR13923:SF11">
    <property type="entry name" value="SECRETORY 31, ISOFORM D"/>
    <property type="match status" value="1"/>
</dbReference>
<dbReference type="Pfam" id="PF00400">
    <property type="entry name" value="WD40"/>
    <property type="match status" value="1"/>
</dbReference>
<dbReference type="SMART" id="SM00320">
    <property type="entry name" value="WD40"/>
    <property type="match status" value="4"/>
</dbReference>
<dbReference type="SUPFAM" id="SSF50978">
    <property type="entry name" value="WD40 repeat-like"/>
    <property type="match status" value="1"/>
</dbReference>
<dbReference type="PROSITE" id="PS50082">
    <property type="entry name" value="WD_REPEATS_2"/>
    <property type="match status" value="1"/>
</dbReference>
<dbReference type="PROSITE" id="PS50294">
    <property type="entry name" value="WD_REPEATS_REGION"/>
    <property type="match status" value="2"/>
</dbReference>
<evidence type="ECO:0000250" key="1"/>
<evidence type="ECO:0000255" key="2">
    <source>
        <dbReference type="PROSITE-ProRule" id="PRU00221"/>
    </source>
</evidence>
<evidence type="ECO:0000256" key="3">
    <source>
        <dbReference type="SAM" id="MobiDB-lite"/>
    </source>
</evidence>
<evidence type="ECO:0000305" key="4"/>
<organism>
    <name type="scientific">Phaeosphaeria nodorum (strain SN15 / ATCC MYA-4574 / FGSC 10173)</name>
    <name type="common">Glume blotch fungus</name>
    <name type="synonym">Parastagonospora nodorum</name>
    <dbReference type="NCBI Taxonomy" id="321614"/>
    <lineage>
        <taxon>Eukaryota</taxon>
        <taxon>Fungi</taxon>
        <taxon>Dikarya</taxon>
        <taxon>Ascomycota</taxon>
        <taxon>Pezizomycotina</taxon>
        <taxon>Dothideomycetes</taxon>
        <taxon>Pleosporomycetidae</taxon>
        <taxon>Pleosporales</taxon>
        <taxon>Pleosporineae</taxon>
        <taxon>Phaeosphaeriaceae</taxon>
        <taxon>Parastagonospora</taxon>
    </lineage>
</organism>
<comment type="function">
    <text evidence="1">Component of the coat protein complex II (COPII) which promotes the formation of transport vesicles from the endoplasmic reticulum (ER). The coat has two main functions, the physical deformation of the endoplasmic reticulum membrane into vesicles and the selection of cargo molecules (By similarity).</text>
</comment>
<comment type="subunit">
    <text evidence="1">The COPII coat is composed of at least 5 proteins: the SEC23/24 complex, the SEC13/31 complex, and the protein SAR1. SEC13 and SEC31 make a 2:2 tetramer that forms the edge element of the COPII outer coat. The tetramer self-assembles in multiple copies to form the complete polyhedral cage. Interacts (via WD 7) with SEC13 (By similarity).</text>
</comment>
<comment type="subcellular location">
    <subcellularLocation>
        <location evidence="1">Cytoplasmic vesicle</location>
        <location evidence="1">COPII-coated vesicle membrane</location>
        <topology evidence="1">Peripheral membrane protein</topology>
        <orientation evidence="1">Cytoplasmic side</orientation>
    </subcellularLocation>
    <subcellularLocation>
        <location evidence="1">Endoplasmic reticulum membrane</location>
        <topology evidence="1">Peripheral membrane protein</topology>
        <orientation evidence="1">Cytoplasmic side</orientation>
    </subcellularLocation>
</comment>
<comment type="similarity">
    <text evidence="4">Belongs to the WD repeat SEC31 family.</text>
</comment>
<keyword id="KW-0968">Cytoplasmic vesicle</keyword>
<keyword id="KW-0256">Endoplasmic reticulum</keyword>
<keyword id="KW-0931">ER-Golgi transport</keyword>
<keyword id="KW-0472">Membrane</keyword>
<keyword id="KW-0653">Protein transport</keyword>
<keyword id="KW-0677">Repeat</keyword>
<keyword id="KW-0813">Transport</keyword>
<keyword id="KW-0853">WD repeat</keyword>
<protein>
    <recommendedName>
        <fullName>Protein transport protein SEC31</fullName>
    </recommendedName>
</protein>
<name>SEC31_PHANO</name>
<reference key="1">
    <citation type="journal article" date="2007" name="Plant Cell">
        <title>Dothideomycete-plant interactions illuminated by genome sequencing and EST analysis of the wheat pathogen Stagonospora nodorum.</title>
        <authorList>
            <person name="Hane J.K."/>
            <person name="Lowe R.G.T."/>
            <person name="Solomon P.S."/>
            <person name="Tan K.-C."/>
            <person name="Schoch C.L."/>
            <person name="Spatafora J.W."/>
            <person name="Crous P.W."/>
            <person name="Kodira C.D."/>
            <person name="Birren B.W."/>
            <person name="Galagan J.E."/>
            <person name="Torriani S.F.F."/>
            <person name="McDonald B.A."/>
            <person name="Oliver R.P."/>
        </authorList>
    </citation>
    <scope>NUCLEOTIDE SEQUENCE [LARGE SCALE GENOMIC DNA]</scope>
    <source>
        <strain>SN15 / ATCC MYA-4574 / FGSC 10173</strain>
    </source>
</reference>
<proteinExistence type="inferred from homology"/>
<accession>Q0ULF5</accession>